<protein>
    <recommendedName>
        <fullName evidence="1">Large ribosomal subunit protein bL21</fullName>
    </recommendedName>
    <alternativeName>
        <fullName evidence="2">50S ribosomal protein L21</fullName>
    </alternativeName>
</protein>
<accession>C1D504</accession>
<comment type="function">
    <text evidence="1">This protein binds to 23S rRNA in the presence of protein L20.</text>
</comment>
<comment type="subunit">
    <text evidence="1">Part of the 50S ribosomal subunit. Contacts protein L20.</text>
</comment>
<comment type="similarity">
    <text evidence="1">Belongs to the bacterial ribosomal protein bL21 family.</text>
</comment>
<gene>
    <name evidence="1" type="primary">rplU</name>
    <name type="ordered locus">LHK_02967</name>
</gene>
<name>RL21_LARHH</name>
<organism>
    <name type="scientific">Laribacter hongkongensis (strain HLHK9)</name>
    <dbReference type="NCBI Taxonomy" id="557598"/>
    <lineage>
        <taxon>Bacteria</taxon>
        <taxon>Pseudomonadati</taxon>
        <taxon>Pseudomonadota</taxon>
        <taxon>Betaproteobacteria</taxon>
        <taxon>Neisseriales</taxon>
        <taxon>Aquaspirillaceae</taxon>
        <taxon>Laribacter</taxon>
    </lineage>
</organism>
<proteinExistence type="inferred from homology"/>
<dbReference type="EMBL" id="CP001154">
    <property type="protein sequence ID" value="ACO75945.1"/>
    <property type="molecule type" value="Genomic_DNA"/>
</dbReference>
<dbReference type="RefSeq" id="WP_012698408.1">
    <property type="nucleotide sequence ID" value="NC_012559.1"/>
</dbReference>
<dbReference type="SMR" id="C1D504"/>
<dbReference type="STRING" id="557598.LHK_02967"/>
<dbReference type="GeneID" id="75108194"/>
<dbReference type="KEGG" id="lhk:LHK_02967"/>
<dbReference type="eggNOG" id="COG0261">
    <property type="taxonomic scope" value="Bacteria"/>
</dbReference>
<dbReference type="HOGENOM" id="CLU_061463_3_2_4"/>
<dbReference type="Proteomes" id="UP000002010">
    <property type="component" value="Chromosome"/>
</dbReference>
<dbReference type="GO" id="GO:0005737">
    <property type="term" value="C:cytoplasm"/>
    <property type="evidence" value="ECO:0007669"/>
    <property type="project" value="UniProtKB-ARBA"/>
</dbReference>
<dbReference type="GO" id="GO:1990904">
    <property type="term" value="C:ribonucleoprotein complex"/>
    <property type="evidence" value="ECO:0007669"/>
    <property type="project" value="UniProtKB-KW"/>
</dbReference>
<dbReference type="GO" id="GO:0005840">
    <property type="term" value="C:ribosome"/>
    <property type="evidence" value="ECO:0007669"/>
    <property type="project" value="UniProtKB-KW"/>
</dbReference>
<dbReference type="GO" id="GO:0019843">
    <property type="term" value="F:rRNA binding"/>
    <property type="evidence" value="ECO:0007669"/>
    <property type="project" value="UniProtKB-UniRule"/>
</dbReference>
<dbReference type="GO" id="GO:0003735">
    <property type="term" value="F:structural constituent of ribosome"/>
    <property type="evidence" value="ECO:0007669"/>
    <property type="project" value="InterPro"/>
</dbReference>
<dbReference type="GO" id="GO:0006412">
    <property type="term" value="P:translation"/>
    <property type="evidence" value="ECO:0007669"/>
    <property type="project" value="UniProtKB-UniRule"/>
</dbReference>
<dbReference type="HAMAP" id="MF_01363">
    <property type="entry name" value="Ribosomal_bL21"/>
    <property type="match status" value="1"/>
</dbReference>
<dbReference type="InterPro" id="IPR028909">
    <property type="entry name" value="bL21-like"/>
</dbReference>
<dbReference type="InterPro" id="IPR036164">
    <property type="entry name" value="bL21-like_sf"/>
</dbReference>
<dbReference type="InterPro" id="IPR001787">
    <property type="entry name" value="Ribosomal_bL21"/>
</dbReference>
<dbReference type="InterPro" id="IPR018258">
    <property type="entry name" value="Ribosomal_bL21_CS"/>
</dbReference>
<dbReference type="NCBIfam" id="TIGR00061">
    <property type="entry name" value="L21"/>
    <property type="match status" value="1"/>
</dbReference>
<dbReference type="PANTHER" id="PTHR21349">
    <property type="entry name" value="50S RIBOSOMAL PROTEIN L21"/>
    <property type="match status" value="1"/>
</dbReference>
<dbReference type="PANTHER" id="PTHR21349:SF0">
    <property type="entry name" value="LARGE RIBOSOMAL SUBUNIT PROTEIN BL21M"/>
    <property type="match status" value="1"/>
</dbReference>
<dbReference type="Pfam" id="PF00829">
    <property type="entry name" value="Ribosomal_L21p"/>
    <property type="match status" value="1"/>
</dbReference>
<dbReference type="SUPFAM" id="SSF141091">
    <property type="entry name" value="L21p-like"/>
    <property type="match status" value="1"/>
</dbReference>
<dbReference type="PROSITE" id="PS01169">
    <property type="entry name" value="RIBOSOMAL_L21"/>
    <property type="match status" value="1"/>
</dbReference>
<feature type="chain" id="PRO_1000166726" description="Large ribosomal subunit protein bL21">
    <location>
        <begin position="1"/>
        <end position="103"/>
    </location>
</feature>
<sequence>MYAVVKTGGKQYRVAVGEKLKVEQIPADIDSQIVLEEVLMVAGGDEVKVGTPLVAGATVKATVVSHGRGEKVRIFKMRRRKHYQKHQGHRQNYTEIRIDEISL</sequence>
<reference key="1">
    <citation type="journal article" date="2009" name="PLoS Genet.">
        <title>The complete genome and proteome of Laribacter hongkongensis reveal potential mechanisms for adaptations to different temperatures and habitats.</title>
        <authorList>
            <person name="Woo P.C.Y."/>
            <person name="Lau S.K.P."/>
            <person name="Tse H."/>
            <person name="Teng J.L.L."/>
            <person name="Curreem S.O."/>
            <person name="Tsang A.K.L."/>
            <person name="Fan R.Y.Y."/>
            <person name="Wong G.K.M."/>
            <person name="Huang Y."/>
            <person name="Loman N.J."/>
            <person name="Snyder L.A.S."/>
            <person name="Cai J.J."/>
            <person name="Huang J.-D."/>
            <person name="Mak W."/>
            <person name="Pallen M.J."/>
            <person name="Lok S."/>
            <person name="Yuen K.-Y."/>
        </authorList>
    </citation>
    <scope>NUCLEOTIDE SEQUENCE [LARGE SCALE GENOMIC DNA]</scope>
    <source>
        <strain>HLHK9</strain>
    </source>
</reference>
<keyword id="KW-1185">Reference proteome</keyword>
<keyword id="KW-0687">Ribonucleoprotein</keyword>
<keyword id="KW-0689">Ribosomal protein</keyword>
<keyword id="KW-0694">RNA-binding</keyword>
<keyword id="KW-0699">rRNA-binding</keyword>
<evidence type="ECO:0000255" key="1">
    <source>
        <dbReference type="HAMAP-Rule" id="MF_01363"/>
    </source>
</evidence>
<evidence type="ECO:0000305" key="2"/>